<name>DTX41_ARATH</name>
<gene>
    <name evidence="10" type="primary">DTX41</name>
    <name evidence="11 12" type="synonym">TDS3</name>
    <name evidence="9" type="synonym">TT12</name>
    <name evidence="14" type="ordered locus">At3g59030</name>
    <name evidence="15" type="ORF">F17J16_80</name>
</gene>
<comment type="function">
    <text evidence="2 4 5">Acts as a flavonoid/H(+)-antiporter that control the vacuolar sequestration of flavonoids in the seed coat endothelium (PubMed:11283341, PubMed:17601828). Could transport the anthocyanin cyanidin-3-O-glucoside (PubMed:17601828) and epicatechin 3'-O-glucoside (PubMed:19684242) in vitro.</text>
</comment>
<comment type="pathway">
    <text>Secondary metabolite biosynthesis; flavonoid biosynthesis.</text>
</comment>
<comment type="subcellular location">
    <subcellularLocation>
        <location evidence="4 8">Vacuole membrane</location>
        <topology evidence="4 8">Multi-pass membrane protein</topology>
    </subcellularLocation>
    <text>Tonoplast.</text>
</comment>
<comment type="tissue specificity">
    <text evidence="2 4">Expressed in reproductive tissues, from buds to siliques. Restricted to the endothelium layer of the ovule and the seed coat.</text>
</comment>
<comment type="developmental stage">
    <text evidence="2">Expressed with a peak at the early globular stage and until the late heart-torpedo stage of embryo development.</text>
</comment>
<comment type="induction">
    <text evidence="7">Positively regulated by the TT2-TT8-TTG1 complex.</text>
</comment>
<comment type="disruption phenotype">
    <text evidence="2 3 4 6">Pale brown seeds due to a strong reduction of proanthocyanidin deposition in vacuoles of endothelial cells.</text>
</comment>
<comment type="similarity">
    <text evidence="13">Belongs to the multi antimicrobial extrusion (MATE) (TC 2.A.66.1) family.</text>
</comment>
<protein>
    <recommendedName>
        <fullName evidence="10">Protein DETOXIFICATION 41</fullName>
        <shortName evidence="10">AtDTX41</shortName>
    </recommendedName>
    <alternativeName>
        <fullName evidence="13">Multidrug and toxic compound extrusion protein 41</fullName>
        <shortName evidence="13">MATE protein 41</shortName>
    </alternativeName>
    <alternativeName>
        <fullName evidence="11 12">Protein TANNIN-DEFICIENT SEED 3</fullName>
    </alternativeName>
    <alternativeName>
        <fullName evidence="9">Protein TRANSPARENT TESTA 12</fullName>
    </alternativeName>
</protein>
<feature type="chain" id="PRO_0000164260" description="Protein DETOXIFICATION 41">
    <location>
        <begin position="1"/>
        <end position="507"/>
    </location>
</feature>
<feature type="topological domain" description="Cytoplasmic" evidence="1">
    <location>
        <begin position="1"/>
        <end position="62"/>
    </location>
</feature>
<feature type="transmembrane region" description="Helical" evidence="1">
    <location>
        <begin position="63"/>
        <end position="83"/>
    </location>
</feature>
<feature type="topological domain" description="Vacuolar" evidence="1">
    <location>
        <begin position="84"/>
        <end position="92"/>
    </location>
</feature>
<feature type="transmembrane region" description="Helical" evidence="1">
    <location>
        <begin position="93"/>
        <end position="113"/>
    </location>
</feature>
<feature type="topological domain" description="Cytoplasmic" evidence="1">
    <location>
        <begin position="114"/>
        <end position="137"/>
    </location>
</feature>
<feature type="transmembrane region" description="Helical" evidence="1">
    <location>
        <begin position="138"/>
        <end position="158"/>
    </location>
</feature>
<feature type="topological domain" description="Vacuolar" evidence="1">
    <location>
        <begin position="159"/>
        <end position="170"/>
    </location>
</feature>
<feature type="transmembrane region" description="Helical" evidence="1">
    <location>
        <begin position="171"/>
        <end position="191"/>
    </location>
</feature>
<feature type="topological domain" description="Cytoplasmic" evidence="1">
    <location>
        <begin position="192"/>
        <end position="202"/>
    </location>
</feature>
<feature type="transmembrane region" description="Helical" evidence="1">
    <location>
        <begin position="203"/>
        <end position="223"/>
    </location>
</feature>
<feature type="topological domain" description="Vacuolar" evidence="1">
    <location>
        <position position="224"/>
    </location>
</feature>
<feature type="transmembrane region" description="Helical" evidence="1">
    <location>
        <begin position="225"/>
        <end position="245"/>
    </location>
</feature>
<feature type="topological domain" description="Cytoplasmic" evidence="1">
    <location>
        <begin position="246"/>
        <end position="283"/>
    </location>
</feature>
<feature type="transmembrane region" description="Helical" evidence="1">
    <location>
        <begin position="284"/>
        <end position="304"/>
    </location>
</feature>
<feature type="topological domain" description="Vacuolar" evidence="1">
    <location>
        <begin position="305"/>
        <end position="312"/>
    </location>
</feature>
<feature type="transmembrane region" description="Helical" evidence="1">
    <location>
        <begin position="313"/>
        <end position="333"/>
    </location>
</feature>
<feature type="topological domain" description="Cytoplasmic" evidence="1">
    <location>
        <begin position="334"/>
        <end position="355"/>
    </location>
</feature>
<feature type="transmembrane region" description="Helical" evidence="1">
    <location>
        <begin position="356"/>
        <end position="376"/>
    </location>
</feature>
<feature type="topological domain" description="Vacuolar" evidence="1">
    <location>
        <begin position="377"/>
        <end position="389"/>
    </location>
</feature>
<feature type="transmembrane region" description="Helical" evidence="1">
    <location>
        <begin position="390"/>
        <end position="410"/>
    </location>
</feature>
<feature type="topological domain" description="Cytoplasmic" evidence="1">
    <location>
        <begin position="411"/>
        <end position="425"/>
    </location>
</feature>
<feature type="transmembrane region" description="Helical" evidence="1">
    <location>
        <begin position="426"/>
        <end position="446"/>
    </location>
</feature>
<feature type="topological domain" description="Vacuolar" evidence="1">
    <location>
        <begin position="447"/>
        <end position="453"/>
    </location>
</feature>
<feature type="transmembrane region" description="Helical" evidence="1">
    <location>
        <begin position="454"/>
        <end position="474"/>
    </location>
</feature>
<feature type="topological domain" description="Cytoplasmic" evidence="1">
    <location>
        <begin position="475"/>
        <end position="507"/>
    </location>
</feature>
<accession>Q9LYT3</accession>
<proteinExistence type="evidence at transcript level"/>
<keyword id="KW-0050">Antiport</keyword>
<keyword id="KW-0284">Flavonoid biosynthesis</keyword>
<keyword id="KW-0472">Membrane</keyword>
<keyword id="KW-1185">Reference proteome</keyword>
<keyword id="KW-0812">Transmembrane</keyword>
<keyword id="KW-1133">Transmembrane helix</keyword>
<keyword id="KW-0813">Transport</keyword>
<keyword id="KW-0926">Vacuole</keyword>
<dbReference type="EMBL" id="AJ294464">
    <property type="protein sequence ID" value="CAC36941.1"/>
    <property type="molecule type" value="mRNA"/>
</dbReference>
<dbReference type="EMBL" id="AL163527">
    <property type="protein sequence ID" value="CAB86931.1"/>
    <property type="molecule type" value="Genomic_DNA"/>
</dbReference>
<dbReference type="EMBL" id="CP002686">
    <property type="protein sequence ID" value="AEE79863.1"/>
    <property type="molecule type" value="Genomic_DNA"/>
</dbReference>
<dbReference type="EMBL" id="AY088768">
    <property type="protein sequence ID" value="AAM67348.1"/>
    <property type="molecule type" value="mRNA"/>
</dbReference>
<dbReference type="PIR" id="T47785">
    <property type="entry name" value="T47785"/>
</dbReference>
<dbReference type="RefSeq" id="NP_191462.1">
    <property type="nucleotide sequence ID" value="NM_115765.4"/>
</dbReference>
<dbReference type="SMR" id="Q9LYT3"/>
<dbReference type="BioGRID" id="10387">
    <property type="interactions" value="11"/>
</dbReference>
<dbReference type="FunCoup" id="Q9LYT3">
    <property type="interactions" value="271"/>
</dbReference>
<dbReference type="IntAct" id="Q9LYT3">
    <property type="interactions" value="10"/>
</dbReference>
<dbReference type="STRING" id="3702.Q9LYT3"/>
<dbReference type="TCDB" id="2.A.66.1.57">
    <property type="family name" value="the multidrug/oligosaccharidyl-lipid/polysaccharide (mop) flippase superfamily"/>
</dbReference>
<dbReference type="iPTMnet" id="Q9LYT3"/>
<dbReference type="PaxDb" id="3702-AT3G59030.1"/>
<dbReference type="ProteomicsDB" id="221881"/>
<dbReference type="EnsemblPlants" id="AT3G59030.1">
    <property type="protein sequence ID" value="AT3G59030.1"/>
    <property type="gene ID" value="AT3G59030"/>
</dbReference>
<dbReference type="GeneID" id="825072"/>
<dbReference type="Gramene" id="AT3G59030.1">
    <property type="protein sequence ID" value="AT3G59030.1"/>
    <property type="gene ID" value="AT3G59030"/>
</dbReference>
<dbReference type="KEGG" id="ath:AT3G59030"/>
<dbReference type="Araport" id="AT3G59030"/>
<dbReference type="TAIR" id="AT3G59030">
    <property type="gene designation" value="TT12"/>
</dbReference>
<dbReference type="eggNOG" id="KOG1347">
    <property type="taxonomic scope" value="Eukaryota"/>
</dbReference>
<dbReference type="HOGENOM" id="CLU_012893_1_4_1"/>
<dbReference type="InParanoid" id="Q9LYT3"/>
<dbReference type="OMA" id="CTETWAY"/>
<dbReference type="OrthoDB" id="2126698at2759"/>
<dbReference type="PhylomeDB" id="Q9LYT3"/>
<dbReference type="UniPathway" id="UPA00154"/>
<dbReference type="PRO" id="PR:Q9LYT3"/>
<dbReference type="Proteomes" id="UP000006548">
    <property type="component" value="Chromosome 3"/>
</dbReference>
<dbReference type="ExpressionAtlas" id="Q9LYT3">
    <property type="expression patterns" value="baseline and differential"/>
</dbReference>
<dbReference type="GO" id="GO:0009705">
    <property type="term" value="C:plant-type vacuole membrane"/>
    <property type="evidence" value="ECO:0000314"/>
    <property type="project" value="UniProtKB"/>
</dbReference>
<dbReference type="GO" id="GO:0140968">
    <property type="term" value="F:polyspecific organic cation:proton antiporter activity"/>
    <property type="evidence" value="ECO:0000314"/>
    <property type="project" value="UniProtKB"/>
</dbReference>
<dbReference type="GO" id="GO:0022857">
    <property type="term" value="F:transmembrane transporter activity"/>
    <property type="evidence" value="ECO:0000250"/>
    <property type="project" value="TAIR"/>
</dbReference>
<dbReference type="GO" id="GO:0042910">
    <property type="term" value="F:xenobiotic transmembrane transporter activity"/>
    <property type="evidence" value="ECO:0007669"/>
    <property type="project" value="InterPro"/>
</dbReference>
<dbReference type="GO" id="GO:0009813">
    <property type="term" value="P:flavonoid biosynthetic process"/>
    <property type="evidence" value="ECO:0007669"/>
    <property type="project" value="UniProtKB-UniPathway"/>
</dbReference>
<dbReference type="GO" id="GO:0010231">
    <property type="term" value="P:maintenance of seed dormancy"/>
    <property type="evidence" value="ECO:0000315"/>
    <property type="project" value="TAIR"/>
</dbReference>
<dbReference type="GO" id="GO:0010023">
    <property type="term" value="P:proanthocyanidin biosynthetic process"/>
    <property type="evidence" value="ECO:0000315"/>
    <property type="project" value="UniProtKB"/>
</dbReference>
<dbReference type="GO" id="GO:1990961">
    <property type="term" value="P:xenobiotic detoxification by transmembrane export across the plasma membrane"/>
    <property type="evidence" value="ECO:0007669"/>
    <property type="project" value="InterPro"/>
</dbReference>
<dbReference type="CDD" id="cd13132">
    <property type="entry name" value="MATE_eukaryotic"/>
    <property type="match status" value="1"/>
</dbReference>
<dbReference type="InterPro" id="IPR045069">
    <property type="entry name" value="MATE_euk"/>
</dbReference>
<dbReference type="InterPro" id="IPR002528">
    <property type="entry name" value="MATE_fam"/>
</dbReference>
<dbReference type="NCBIfam" id="TIGR00797">
    <property type="entry name" value="matE"/>
    <property type="match status" value="1"/>
</dbReference>
<dbReference type="PANTHER" id="PTHR11206">
    <property type="entry name" value="MULTIDRUG RESISTANCE PROTEIN"/>
    <property type="match status" value="1"/>
</dbReference>
<dbReference type="Pfam" id="PF01554">
    <property type="entry name" value="MatE"/>
    <property type="match status" value="2"/>
</dbReference>
<reference key="1">
    <citation type="journal article" date="2001" name="Plant Cell">
        <title>The TRANSPARENT TESTA12 gene of Arabidopsis encodes a multidrug secondary transporter-like protein required for flavonoid sequestration in vacuoles of the seed coat endothelium.</title>
        <authorList>
            <person name="Debeaujon I."/>
            <person name="Peeters A.J."/>
            <person name="Leon-Kloosterziel K.M."/>
            <person name="Koornneef M."/>
        </authorList>
    </citation>
    <scope>NUCLEOTIDE SEQUENCE [MRNA]</scope>
    <scope>FUNCTION</scope>
    <scope>TISSUE SPECIFICITY</scope>
    <scope>DEVELOPMENTAL STAGE</scope>
    <scope>DISRUPTION PHENOTYPE</scope>
    <source>
        <strain>cv. Columbia</strain>
        <tissue>Silique</tissue>
    </source>
</reference>
<reference key="2">
    <citation type="journal article" date="2000" name="Nature">
        <title>Sequence and analysis of chromosome 3 of the plant Arabidopsis thaliana.</title>
        <authorList>
            <person name="Salanoubat M."/>
            <person name="Lemcke K."/>
            <person name="Rieger M."/>
            <person name="Ansorge W."/>
            <person name="Unseld M."/>
            <person name="Fartmann B."/>
            <person name="Valle G."/>
            <person name="Bloecker H."/>
            <person name="Perez-Alonso M."/>
            <person name="Obermaier B."/>
            <person name="Delseny M."/>
            <person name="Boutry M."/>
            <person name="Grivell L.A."/>
            <person name="Mache R."/>
            <person name="Puigdomenech P."/>
            <person name="De Simone V."/>
            <person name="Choisne N."/>
            <person name="Artiguenave F."/>
            <person name="Robert C."/>
            <person name="Brottier P."/>
            <person name="Wincker P."/>
            <person name="Cattolico L."/>
            <person name="Weissenbach J."/>
            <person name="Saurin W."/>
            <person name="Quetier F."/>
            <person name="Schaefer M."/>
            <person name="Mueller-Auer S."/>
            <person name="Gabel C."/>
            <person name="Fuchs M."/>
            <person name="Benes V."/>
            <person name="Wurmbach E."/>
            <person name="Drzonek H."/>
            <person name="Erfle H."/>
            <person name="Jordan N."/>
            <person name="Bangert S."/>
            <person name="Wiedelmann R."/>
            <person name="Kranz H."/>
            <person name="Voss H."/>
            <person name="Holland R."/>
            <person name="Brandt P."/>
            <person name="Nyakatura G."/>
            <person name="Vezzi A."/>
            <person name="D'Angelo M."/>
            <person name="Pallavicini A."/>
            <person name="Toppo S."/>
            <person name="Simionati B."/>
            <person name="Conrad A."/>
            <person name="Hornischer K."/>
            <person name="Kauer G."/>
            <person name="Loehnert T.-H."/>
            <person name="Nordsiek G."/>
            <person name="Reichelt J."/>
            <person name="Scharfe M."/>
            <person name="Schoen O."/>
            <person name="Bargues M."/>
            <person name="Terol J."/>
            <person name="Climent J."/>
            <person name="Navarro P."/>
            <person name="Collado C."/>
            <person name="Perez-Perez A."/>
            <person name="Ottenwaelder B."/>
            <person name="Duchemin D."/>
            <person name="Cooke R."/>
            <person name="Laudie M."/>
            <person name="Berger-Llauro C."/>
            <person name="Purnelle B."/>
            <person name="Masuy D."/>
            <person name="de Haan M."/>
            <person name="Maarse A.C."/>
            <person name="Alcaraz J.-P."/>
            <person name="Cottet A."/>
            <person name="Casacuberta E."/>
            <person name="Monfort A."/>
            <person name="Argiriou A."/>
            <person name="Flores M."/>
            <person name="Liguori R."/>
            <person name="Vitale D."/>
            <person name="Mannhaupt G."/>
            <person name="Haase D."/>
            <person name="Schoof H."/>
            <person name="Rudd S."/>
            <person name="Zaccaria P."/>
            <person name="Mewes H.-W."/>
            <person name="Mayer K.F.X."/>
            <person name="Kaul S."/>
            <person name="Town C.D."/>
            <person name="Koo H.L."/>
            <person name="Tallon L.J."/>
            <person name="Jenkins J."/>
            <person name="Rooney T."/>
            <person name="Rizzo M."/>
            <person name="Walts A."/>
            <person name="Utterback T."/>
            <person name="Fujii C.Y."/>
            <person name="Shea T.P."/>
            <person name="Creasy T.H."/>
            <person name="Haas B."/>
            <person name="Maiti R."/>
            <person name="Wu D."/>
            <person name="Peterson J."/>
            <person name="Van Aken S."/>
            <person name="Pai G."/>
            <person name="Militscher J."/>
            <person name="Sellers P."/>
            <person name="Gill J.E."/>
            <person name="Feldblyum T.V."/>
            <person name="Preuss D."/>
            <person name="Lin X."/>
            <person name="Nierman W.C."/>
            <person name="Salzberg S.L."/>
            <person name="White O."/>
            <person name="Venter J.C."/>
            <person name="Fraser C.M."/>
            <person name="Kaneko T."/>
            <person name="Nakamura Y."/>
            <person name="Sato S."/>
            <person name="Kato T."/>
            <person name="Asamizu E."/>
            <person name="Sasamoto S."/>
            <person name="Kimura T."/>
            <person name="Idesawa K."/>
            <person name="Kawashima K."/>
            <person name="Kishida Y."/>
            <person name="Kiyokawa C."/>
            <person name="Kohara M."/>
            <person name="Matsumoto M."/>
            <person name="Matsuno A."/>
            <person name="Muraki A."/>
            <person name="Nakayama S."/>
            <person name="Nakazaki N."/>
            <person name="Shinpo S."/>
            <person name="Takeuchi C."/>
            <person name="Wada T."/>
            <person name="Watanabe A."/>
            <person name="Yamada M."/>
            <person name="Yasuda M."/>
            <person name="Tabata S."/>
        </authorList>
    </citation>
    <scope>NUCLEOTIDE SEQUENCE [LARGE SCALE GENOMIC DNA]</scope>
    <source>
        <strain>cv. Columbia</strain>
    </source>
</reference>
<reference key="3">
    <citation type="journal article" date="2017" name="Plant J.">
        <title>Araport11: a complete reannotation of the Arabidopsis thaliana reference genome.</title>
        <authorList>
            <person name="Cheng C.Y."/>
            <person name="Krishnakumar V."/>
            <person name="Chan A.P."/>
            <person name="Thibaud-Nissen F."/>
            <person name="Schobel S."/>
            <person name="Town C.D."/>
        </authorList>
    </citation>
    <scope>GENOME REANNOTATION</scope>
    <source>
        <strain>cv. Columbia</strain>
    </source>
</reference>
<reference key="4">
    <citation type="submission" date="2002-03" db="EMBL/GenBank/DDBJ databases">
        <title>Full-length cDNA from Arabidopsis thaliana.</title>
        <authorList>
            <person name="Brover V.V."/>
            <person name="Troukhan M.E."/>
            <person name="Alexandrov N.A."/>
            <person name="Lu Y.-P."/>
            <person name="Flavell R.B."/>
            <person name="Feldmann K.A."/>
        </authorList>
    </citation>
    <scope>NUCLEOTIDE SEQUENCE [LARGE SCALE MRNA]</scope>
</reference>
<reference key="5">
    <citation type="journal article" date="2002" name="J. Biol. Chem.">
        <title>Functional cloning and characterization of a plant efflux carrier for multidrug and heavy metal detoxification.</title>
        <authorList>
            <person name="Li L."/>
            <person name="He Z."/>
            <person name="Pandey G.K."/>
            <person name="Tsuchiya T."/>
            <person name="Luan S."/>
        </authorList>
    </citation>
    <scope>GENE FAMILY</scope>
    <scope>NOMENCLATURE</scope>
</reference>
<reference key="6">
    <citation type="journal article" date="2002" name="Plant Physiol.">
        <title>Identification and biochemical characterization of mutants in the proanthocyanidin pathway in Arabidopsis.</title>
        <authorList>
            <person name="Abrahams S."/>
            <person name="Tanner G.J."/>
            <person name="Larkin P.J."/>
            <person name="Ashton A.R."/>
        </authorList>
    </citation>
    <scope>DISRUPTION PHENOTYPE</scope>
</reference>
<reference key="7">
    <citation type="journal article" date="2003" name="Eur. J. Biochem.">
        <title>The multidrug/oligosaccharidyl-lipid/polysaccharide (MOP) exporter superfamily.</title>
        <authorList>
            <person name="Hvorup R.N."/>
            <person name="Winnen B."/>
            <person name="Chang A.B."/>
            <person name="Jiang Y."/>
            <person name="Zhou X.F."/>
            <person name="Saier M.H. Jr."/>
        </authorList>
    </citation>
    <scope>GENE FAMILY</scope>
</reference>
<reference key="8">
    <citation type="journal article" date="2007" name="Plant Cell">
        <title>The Arabidopsis MATE transporter TT12 acts as a vacuolar flavonoid/H+ -antiporter active in proanthocyanidin-accumulating cells of the seed coat.</title>
        <authorList>
            <person name="Marinova K."/>
            <person name="Pourcel L."/>
            <person name="Weder B."/>
            <person name="Schwarz M."/>
            <person name="Barron D."/>
            <person name="Routaboul J.M."/>
            <person name="Debeaujon I."/>
            <person name="Klein M."/>
        </authorList>
    </citation>
    <scope>FUNCTION</scope>
    <scope>SUBCELLULAR LOCATION</scope>
    <scope>DISRUPTION PHENOTYPE</scope>
    <scope>TISSUE SPECIFICITY</scope>
</reference>
<reference key="9">
    <citation type="journal article" date="2009" name="Plant Cell">
        <title>MATE transporters facilitate vacuolar uptake of epicatechin 3'-O-glucoside for proanthocyanidin biosynthesis in Medicago truncatula and Arabidopsis.</title>
        <authorList>
            <person name="Zhao J."/>
            <person name="Dixon R.A."/>
        </authorList>
    </citation>
    <scope>FUNCTION</scope>
</reference>
<reference key="10">
    <citation type="journal article" date="2010" name="Plant J.">
        <title>Metabolic profiling and cytological analysis of proanthocyanidins in immature seeds of Arabidopsis thaliana flavonoid accumulation mutants.</title>
        <authorList>
            <person name="Kitamura S."/>
            <person name="Matsuda F."/>
            <person name="Tohge T."/>
            <person name="Yonekura-Sakakibara K."/>
            <person name="Yamazaki M."/>
            <person name="Saito K."/>
            <person name="Narumi I."/>
        </authorList>
    </citation>
    <scope>DISRUPTION PHENOTYPE</scope>
</reference>
<reference key="11">
    <citation type="journal article" date="2013" name="Plant Physiol. Biochem.">
        <title>The flavonoid biosynthetic pathway in Arabidopsis: Structural and genetic diversity.</title>
        <authorList>
            <person name="Saito K."/>
            <person name="Yonekura-Sakakibara K."/>
            <person name="Nakabayashi R."/>
            <person name="Higashi Y."/>
            <person name="Yamazaki M."/>
            <person name="Tohge T."/>
            <person name="Fernie A.R."/>
        </authorList>
    </citation>
    <scope>REVIEW</scope>
</reference>
<reference key="12">
    <citation type="journal article" date="2014" name="New Phytol.">
        <title>Complexity and robustness of the flavonoid transcriptional regulatory network revealed by comprehensive analyses of MYB-bHLH-WDR complexes and their targets in Arabidopsis seed.</title>
        <authorList>
            <person name="Xu W."/>
            <person name="Grain D."/>
            <person name="Bobet S."/>
            <person name="Le Gourrierec J."/>
            <person name="Thevenin J."/>
            <person name="Kelemen Z."/>
            <person name="Lepiniec L."/>
            <person name="Dubos C."/>
        </authorList>
    </citation>
    <scope>INDUCTION</scope>
</reference>
<reference key="13">
    <citation type="journal article" date="2014" name="Planta">
        <title>Update on transparent testa mutants from Arabidopsis thaliana: characterisation of new alleles from an isogenic collection.</title>
        <authorList>
            <person name="Appelhagen I."/>
            <person name="Thiedig K."/>
            <person name="Nordholt N."/>
            <person name="Schmidt N."/>
            <person name="Huep G."/>
            <person name="Sagasser M."/>
            <person name="Weisshaar B."/>
        </authorList>
    </citation>
    <scope>ALLELIC MUTANTS TT12 AND TDS3</scope>
</reference>
<reference key="14">
    <citation type="journal article" date="2015" name="Plant J.">
        <title>TRANSPARENT TESTA 13 is a tonoplast P3A -ATPase required for vacuolar deposition of proanthocyanidins in Arabidopsis thaliana seeds.</title>
        <authorList>
            <person name="Appelhagen I."/>
            <person name="Nordholt N."/>
            <person name="Seidel T."/>
            <person name="Spelt K."/>
            <person name="Koes R."/>
            <person name="Quattrochio F."/>
            <person name="Sagasser M."/>
            <person name="Weisshaar B."/>
        </authorList>
    </citation>
    <scope>SUBCELLULAR LOCATION</scope>
</reference>
<evidence type="ECO:0000255" key="1"/>
<evidence type="ECO:0000269" key="2">
    <source>
    </source>
</evidence>
<evidence type="ECO:0000269" key="3">
    <source>
    </source>
</evidence>
<evidence type="ECO:0000269" key="4">
    <source>
    </source>
</evidence>
<evidence type="ECO:0000269" key="5">
    <source>
    </source>
</evidence>
<evidence type="ECO:0000269" key="6">
    <source>
    </source>
</evidence>
<evidence type="ECO:0000269" key="7">
    <source>
    </source>
</evidence>
<evidence type="ECO:0000269" key="8">
    <source>
    </source>
</evidence>
<evidence type="ECO:0000303" key="9">
    <source>
    </source>
</evidence>
<evidence type="ECO:0000303" key="10">
    <source>
    </source>
</evidence>
<evidence type="ECO:0000303" key="11">
    <source>
    </source>
</evidence>
<evidence type="ECO:0000303" key="12">
    <source>
    </source>
</evidence>
<evidence type="ECO:0000305" key="13"/>
<evidence type="ECO:0000312" key="14">
    <source>
        <dbReference type="Araport" id="AT3G59030"/>
    </source>
</evidence>
<evidence type="ECO:0000312" key="15">
    <source>
        <dbReference type="EMBL" id="CAB86931.1"/>
    </source>
</evidence>
<sequence>MSSTETYEPLLTRLHSDSQITERSSPEIEEFLRRRGSTVTPRWWLKLAVWESKLLWTLSGASIVVSVLNYMLSFVTVMFTGHLGSLQLAGASIATVGIQGLAYGIMLGMASAVQTVCGQAYGARQYSSMGIICQRAMVLHLAAAVFLTFLYWYSGPILKTMGQSVAIAHEGQIFARGMIPQIYAFALACPMQRFLQAQNIVNPLAYMSLGVFLLHTLLTWLVTNVLDFGLLGAALILSFSWWLLVAVNGMYILMSPNCKETWTGFSTRAFRGIWPYFKLTVASAVMLCLEIWYNQGLVIISGLLSNPTISLDAISICMYYLNWDMQFMLGLSAAISVRVSNELGAGNPRVAMLSVVVVNITTVLISSVLCVIVLVFRVGLSKAFTSDAEVIAAVSDLFPLLAVSIFLNGIQPILSGVAIGSGWQAVVAYVNLVTYYVIGLPIGCVLGFKTSLGVAGIWWGMIAGVILQTLTLIVLTLKTNWTSEVENAAQRVKTSATENQEMANAGV</sequence>
<organism>
    <name type="scientific">Arabidopsis thaliana</name>
    <name type="common">Mouse-ear cress</name>
    <dbReference type="NCBI Taxonomy" id="3702"/>
    <lineage>
        <taxon>Eukaryota</taxon>
        <taxon>Viridiplantae</taxon>
        <taxon>Streptophyta</taxon>
        <taxon>Embryophyta</taxon>
        <taxon>Tracheophyta</taxon>
        <taxon>Spermatophyta</taxon>
        <taxon>Magnoliopsida</taxon>
        <taxon>eudicotyledons</taxon>
        <taxon>Gunneridae</taxon>
        <taxon>Pentapetalae</taxon>
        <taxon>rosids</taxon>
        <taxon>malvids</taxon>
        <taxon>Brassicales</taxon>
        <taxon>Brassicaceae</taxon>
        <taxon>Camelineae</taxon>
        <taxon>Arabidopsis</taxon>
    </lineage>
</organism>